<name>AMPA_ACISJ</name>
<proteinExistence type="inferred from homology"/>
<dbReference type="EC" id="3.4.11.1" evidence="1"/>
<dbReference type="EC" id="3.4.11.10" evidence="1"/>
<dbReference type="EMBL" id="CP000539">
    <property type="protein sequence ID" value="ABM42101.1"/>
    <property type="molecule type" value="Genomic_DNA"/>
</dbReference>
<dbReference type="SMR" id="A1W776"/>
<dbReference type="STRING" id="232721.Ajs_1921"/>
<dbReference type="MEROPS" id="M17.003"/>
<dbReference type="KEGG" id="ajs:Ajs_1921"/>
<dbReference type="eggNOG" id="COG0260">
    <property type="taxonomic scope" value="Bacteria"/>
</dbReference>
<dbReference type="HOGENOM" id="CLU_013734_2_2_4"/>
<dbReference type="Proteomes" id="UP000000645">
    <property type="component" value="Chromosome"/>
</dbReference>
<dbReference type="GO" id="GO:0005737">
    <property type="term" value="C:cytoplasm"/>
    <property type="evidence" value="ECO:0007669"/>
    <property type="project" value="UniProtKB-SubCell"/>
</dbReference>
<dbReference type="GO" id="GO:0030145">
    <property type="term" value="F:manganese ion binding"/>
    <property type="evidence" value="ECO:0007669"/>
    <property type="project" value="UniProtKB-UniRule"/>
</dbReference>
<dbReference type="GO" id="GO:0070006">
    <property type="term" value="F:metalloaminopeptidase activity"/>
    <property type="evidence" value="ECO:0007669"/>
    <property type="project" value="InterPro"/>
</dbReference>
<dbReference type="GO" id="GO:0006508">
    <property type="term" value="P:proteolysis"/>
    <property type="evidence" value="ECO:0007669"/>
    <property type="project" value="UniProtKB-KW"/>
</dbReference>
<dbReference type="CDD" id="cd00433">
    <property type="entry name" value="Peptidase_M17"/>
    <property type="match status" value="1"/>
</dbReference>
<dbReference type="Gene3D" id="3.40.220.10">
    <property type="entry name" value="Leucine Aminopeptidase, subunit E, domain 1"/>
    <property type="match status" value="1"/>
</dbReference>
<dbReference type="Gene3D" id="3.40.630.10">
    <property type="entry name" value="Zn peptidases"/>
    <property type="match status" value="1"/>
</dbReference>
<dbReference type="HAMAP" id="MF_00181">
    <property type="entry name" value="Cytosol_peptidase_M17"/>
    <property type="match status" value="1"/>
</dbReference>
<dbReference type="InterPro" id="IPR011356">
    <property type="entry name" value="Leucine_aapep/pepB"/>
</dbReference>
<dbReference type="InterPro" id="IPR043472">
    <property type="entry name" value="Macro_dom-like"/>
</dbReference>
<dbReference type="InterPro" id="IPR000819">
    <property type="entry name" value="Peptidase_M17_C"/>
</dbReference>
<dbReference type="InterPro" id="IPR023042">
    <property type="entry name" value="Peptidase_M17_leu_NH2_pept"/>
</dbReference>
<dbReference type="InterPro" id="IPR008283">
    <property type="entry name" value="Peptidase_M17_N"/>
</dbReference>
<dbReference type="NCBIfam" id="NF002074">
    <property type="entry name" value="PRK00913.1-4"/>
    <property type="match status" value="1"/>
</dbReference>
<dbReference type="NCBIfam" id="NF002077">
    <property type="entry name" value="PRK00913.2-4"/>
    <property type="match status" value="1"/>
</dbReference>
<dbReference type="PANTHER" id="PTHR11963:SF23">
    <property type="entry name" value="CYTOSOL AMINOPEPTIDASE"/>
    <property type="match status" value="1"/>
</dbReference>
<dbReference type="PANTHER" id="PTHR11963">
    <property type="entry name" value="LEUCINE AMINOPEPTIDASE-RELATED"/>
    <property type="match status" value="1"/>
</dbReference>
<dbReference type="Pfam" id="PF00883">
    <property type="entry name" value="Peptidase_M17"/>
    <property type="match status" value="1"/>
</dbReference>
<dbReference type="Pfam" id="PF02789">
    <property type="entry name" value="Peptidase_M17_N"/>
    <property type="match status" value="1"/>
</dbReference>
<dbReference type="PRINTS" id="PR00481">
    <property type="entry name" value="LAMNOPPTDASE"/>
</dbReference>
<dbReference type="SUPFAM" id="SSF52949">
    <property type="entry name" value="Macro domain-like"/>
    <property type="match status" value="1"/>
</dbReference>
<dbReference type="SUPFAM" id="SSF53187">
    <property type="entry name" value="Zn-dependent exopeptidases"/>
    <property type="match status" value="1"/>
</dbReference>
<dbReference type="PROSITE" id="PS00631">
    <property type="entry name" value="CYTOSOL_AP"/>
    <property type="match status" value="1"/>
</dbReference>
<evidence type="ECO:0000255" key="1">
    <source>
        <dbReference type="HAMAP-Rule" id="MF_00181"/>
    </source>
</evidence>
<sequence>MNFELKTLSLAASAAHKCDLLVVLVPEGFLPGSDVLSTMVAHALKQGDLEVKPGKLLQCYAPAGVAARRVVLLGCGAADAHAVRQAMQALSPSFKLPSVKRVALVFGTSAQRGAIGAAVRAVADGSYVYTATKTKAEPRALLRVTLGVPNAGAAQPEFATATAVAAGVEFAREWANRPANHATPTLVANAAKTLAKYPGVQCQVLGPAEVAKLGMGAFLAVAQGSDQPLRLVELRYNGAARTQAPVVLVGKGITFDTGGISLKPAAEMDEMKFDMGGAASVLGVFRALAELRPAINVVGLIPACENMPDGKAVKPGDVVTSMSGQTIEILNTDAEGRLVLCDALTYAARFKPAAVVDIATLTGACVVALGGLRSGLFASDDLLAEQLLSAGDAALDPCWRMPLDDEYAEGLKSNFADMANVAGRAGGSITAAKFLQRFVGDTPWAHLDIAGTAWKGGAAKGATGRPVALLVHYLLDQATVSTVKPKQKTRSRKSVA</sequence>
<organism>
    <name type="scientific">Acidovorax sp. (strain JS42)</name>
    <dbReference type="NCBI Taxonomy" id="232721"/>
    <lineage>
        <taxon>Bacteria</taxon>
        <taxon>Pseudomonadati</taxon>
        <taxon>Pseudomonadota</taxon>
        <taxon>Betaproteobacteria</taxon>
        <taxon>Burkholderiales</taxon>
        <taxon>Comamonadaceae</taxon>
        <taxon>Acidovorax</taxon>
    </lineage>
</organism>
<protein>
    <recommendedName>
        <fullName evidence="1">Probable cytosol aminopeptidase</fullName>
        <ecNumber evidence="1">3.4.11.1</ecNumber>
    </recommendedName>
    <alternativeName>
        <fullName evidence="1">Leucine aminopeptidase</fullName>
        <shortName evidence="1">LAP</shortName>
        <ecNumber evidence="1">3.4.11.10</ecNumber>
    </alternativeName>
    <alternativeName>
        <fullName evidence="1">Leucyl aminopeptidase</fullName>
    </alternativeName>
</protein>
<gene>
    <name evidence="1" type="primary">pepA</name>
    <name type="ordered locus">Ajs_1921</name>
</gene>
<reference key="1">
    <citation type="submission" date="2006-12" db="EMBL/GenBank/DDBJ databases">
        <title>Complete sequence of chromosome 1 of Acidovorax sp. JS42.</title>
        <authorList>
            <person name="Copeland A."/>
            <person name="Lucas S."/>
            <person name="Lapidus A."/>
            <person name="Barry K."/>
            <person name="Detter J.C."/>
            <person name="Glavina del Rio T."/>
            <person name="Dalin E."/>
            <person name="Tice H."/>
            <person name="Pitluck S."/>
            <person name="Chertkov O."/>
            <person name="Brettin T."/>
            <person name="Bruce D."/>
            <person name="Han C."/>
            <person name="Tapia R."/>
            <person name="Gilna P."/>
            <person name="Schmutz J."/>
            <person name="Larimer F."/>
            <person name="Land M."/>
            <person name="Hauser L."/>
            <person name="Kyrpides N."/>
            <person name="Kim E."/>
            <person name="Stahl D."/>
            <person name="Richardson P."/>
        </authorList>
    </citation>
    <scope>NUCLEOTIDE SEQUENCE [LARGE SCALE GENOMIC DNA]</scope>
    <source>
        <strain>JS42</strain>
    </source>
</reference>
<accession>A1W776</accession>
<feature type="chain" id="PRO_1000118445" description="Probable cytosol aminopeptidase">
    <location>
        <begin position="1"/>
        <end position="496"/>
    </location>
</feature>
<feature type="active site" evidence="1">
    <location>
        <position position="263"/>
    </location>
</feature>
<feature type="active site" evidence="1">
    <location>
        <position position="337"/>
    </location>
</feature>
<feature type="binding site" evidence="1">
    <location>
        <position position="251"/>
    </location>
    <ligand>
        <name>Mn(2+)</name>
        <dbReference type="ChEBI" id="CHEBI:29035"/>
        <label>2</label>
    </ligand>
</feature>
<feature type="binding site" evidence="1">
    <location>
        <position position="256"/>
    </location>
    <ligand>
        <name>Mn(2+)</name>
        <dbReference type="ChEBI" id="CHEBI:29035"/>
        <label>1</label>
    </ligand>
</feature>
<feature type="binding site" evidence="1">
    <location>
        <position position="256"/>
    </location>
    <ligand>
        <name>Mn(2+)</name>
        <dbReference type="ChEBI" id="CHEBI:29035"/>
        <label>2</label>
    </ligand>
</feature>
<feature type="binding site" evidence="1">
    <location>
        <position position="274"/>
    </location>
    <ligand>
        <name>Mn(2+)</name>
        <dbReference type="ChEBI" id="CHEBI:29035"/>
        <label>2</label>
    </ligand>
</feature>
<feature type="binding site" evidence="1">
    <location>
        <position position="333"/>
    </location>
    <ligand>
        <name>Mn(2+)</name>
        <dbReference type="ChEBI" id="CHEBI:29035"/>
        <label>1</label>
    </ligand>
</feature>
<feature type="binding site" evidence="1">
    <location>
        <position position="335"/>
    </location>
    <ligand>
        <name>Mn(2+)</name>
        <dbReference type="ChEBI" id="CHEBI:29035"/>
        <label>1</label>
    </ligand>
</feature>
<feature type="binding site" evidence="1">
    <location>
        <position position="335"/>
    </location>
    <ligand>
        <name>Mn(2+)</name>
        <dbReference type="ChEBI" id="CHEBI:29035"/>
        <label>2</label>
    </ligand>
</feature>
<comment type="function">
    <text evidence="1">Presumably involved in the processing and regular turnover of intracellular proteins. Catalyzes the removal of unsubstituted N-terminal amino acids from various peptides.</text>
</comment>
<comment type="catalytic activity">
    <reaction evidence="1">
        <text>Release of an N-terminal amino acid, Xaa-|-Yaa-, in which Xaa is preferably Leu, but may be other amino acids including Pro although not Arg or Lys, and Yaa may be Pro. Amino acid amides and methyl esters are also readily hydrolyzed, but rates on arylamides are exceedingly low.</text>
        <dbReference type="EC" id="3.4.11.1"/>
    </reaction>
</comment>
<comment type="catalytic activity">
    <reaction evidence="1">
        <text>Release of an N-terminal amino acid, preferentially leucine, but not glutamic or aspartic acids.</text>
        <dbReference type="EC" id="3.4.11.10"/>
    </reaction>
</comment>
<comment type="cofactor">
    <cofactor evidence="1">
        <name>Mn(2+)</name>
        <dbReference type="ChEBI" id="CHEBI:29035"/>
    </cofactor>
    <text evidence="1">Binds 2 manganese ions per subunit.</text>
</comment>
<comment type="subcellular location">
    <subcellularLocation>
        <location evidence="1">Cytoplasm</location>
    </subcellularLocation>
</comment>
<comment type="similarity">
    <text evidence="1">Belongs to the peptidase M17 family.</text>
</comment>
<keyword id="KW-0031">Aminopeptidase</keyword>
<keyword id="KW-0963">Cytoplasm</keyword>
<keyword id="KW-0378">Hydrolase</keyword>
<keyword id="KW-0464">Manganese</keyword>
<keyword id="KW-0479">Metal-binding</keyword>
<keyword id="KW-0645">Protease</keyword>